<reference key="1">
    <citation type="journal article" date="2005" name="FEBS J.">
        <title>Characterization of solanesyl and decaprenyl diphosphate synthases in mice and humans.</title>
        <authorList>
            <person name="Saiki R."/>
            <person name="Nagata A."/>
            <person name="Kainou T."/>
            <person name="Matsuda H."/>
            <person name="Kawamukai M."/>
        </authorList>
    </citation>
    <scope>NUCLEOTIDE SEQUENCE [MRNA] (ISOFORM 1)</scope>
    <scope>FUNCTION</scope>
    <scope>CATALYTIC ACTIVITY</scope>
    <scope>SUBUNIT</scope>
</reference>
<reference key="2">
    <citation type="journal article" date="2005" name="Science">
        <title>The transcriptional landscape of the mammalian genome.</title>
        <authorList>
            <person name="Carninci P."/>
            <person name="Kasukawa T."/>
            <person name="Katayama S."/>
            <person name="Gough J."/>
            <person name="Frith M.C."/>
            <person name="Maeda N."/>
            <person name="Oyama R."/>
            <person name="Ravasi T."/>
            <person name="Lenhard B."/>
            <person name="Wells C."/>
            <person name="Kodzius R."/>
            <person name="Shimokawa K."/>
            <person name="Bajic V.B."/>
            <person name="Brenner S.E."/>
            <person name="Batalov S."/>
            <person name="Forrest A.R."/>
            <person name="Zavolan M."/>
            <person name="Davis M.J."/>
            <person name="Wilming L.G."/>
            <person name="Aidinis V."/>
            <person name="Allen J.E."/>
            <person name="Ambesi-Impiombato A."/>
            <person name="Apweiler R."/>
            <person name="Aturaliya R.N."/>
            <person name="Bailey T.L."/>
            <person name="Bansal M."/>
            <person name="Baxter L."/>
            <person name="Beisel K.W."/>
            <person name="Bersano T."/>
            <person name="Bono H."/>
            <person name="Chalk A.M."/>
            <person name="Chiu K.P."/>
            <person name="Choudhary V."/>
            <person name="Christoffels A."/>
            <person name="Clutterbuck D.R."/>
            <person name="Crowe M.L."/>
            <person name="Dalla E."/>
            <person name="Dalrymple B.P."/>
            <person name="de Bono B."/>
            <person name="Della Gatta G."/>
            <person name="di Bernardo D."/>
            <person name="Down T."/>
            <person name="Engstrom P."/>
            <person name="Fagiolini M."/>
            <person name="Faulkner G."/>
            <person name="Fletcher C.F."/>
            <person name="Fukushima T."/>
            <person name="Furuno M."/>
            <person name="Futaki S."/>
            <person name="Gariboldi M."/>
            <person name="Georgii-Hemming P."/>
            <person name="Gingeras T.R."/>
            <person name="Gojobori T."/>
            <person name="Green R.E."/>
            <person name="Gustincich S."/>
            <person name="Harbers M."/>
            <person name="Hayashi Y."/>
            <person name="Hensch T.K."/>
            <person name="Hirokawa N."/>
            <person name="Hill D."/>
            <person name="Huminiecki L."/>
            <person name="Iacono M."/>
            <person name="Ikeo K."/>
            <person name="Iwama A."/>
            <person name="Ishikawa T."/>
            <person name="Jakt M."/>
            <person name="Kanapin A."/>
            <person name="Katoh M."/>
            <person name="Kawasawa Y."/>
            <person name="Kelso J."/>
            <person name="Kitamura H."/>
            <person name="Kitano H."/>
            <person name="Kollias G."/>
            <person name="Krishnan S.P."/>
            <person name="Kruger A."/>
            <person name="Kummerfeld S.K."/>
            <person name="Kurochkin I.V."/>
            <person name="Lareau L.F."/>
            <person name="Lazarevic D."/>
            <person name="Lipovich L."/>
            <person name="Liu J."/>
            <person name="Liuni S."/>
            <person name="McWilliam S."/>
            <person name="Madan Babu M."/>
            <person name="Madera M."/>
            <person name="Marchionni L."/>
            <person name="Matsuda H."/>
            <person name="Matsuzawa S."/>
            <person name="Miki H."/>
            <person name="Mignone F."/>
            <person name="Miyake S."/>
            <person name="Morris K."/>
            <person name="Mottagui-Tabar S."/>
            <person name="Mulder N."/>
            <person name="Nakano N."/>
            <person name="Nakauchi H."/>
            <person name="Ng P."/>
            <person name="Nilsson R."/>
            <person name="Nishiguchi S."/>
            <person name="Nishikawa S."/>
            <person name="Nori F."/>
            <person name="Ohara O."/>
            <person name="Okazaki Y."/>
            <person name="Orlando V."/>
            <person name="Pang K.C."/>
            <person name="Pavan W.J."/>
            <person name="Pavesi G."/>
            <person name="Pesole G."/>
            <person name="Petrovsky N."/>
            <person name="Piazza S."/>
            <person name="Reed J."/>
            <person name="Reid J.F."/>
            <person name="Ring B.Z."/>
            <person name="Ringwald M."/>
            <person name="Rost B."/>
            <person name="Ruan Y."/>
            <person name="Salzberg S.L."/>
            <person name="Sandelin A."/>
            <person name="Schneider C."/>
            <person name="Schoenbach C."/>
            <person name="Sekiguchi K."/>
            <person name="Semple C.A."/>
            <person name="Seno S."/>
            <person name="Sessa L."/>
            <person name="Sheng Y."/>
            <person name="Shibata Y."/>
            <person name="Shimada H."/>
            <person name="Shimada K."/>
            <person name="Silva D."/>
            <person name="Sinclair B."/>
            <person name="Sperling S."/>
            <person name="Stupka E."/>
            <person name="Sugiura K."/>
            <person name="Sultana R."/>
            <person name="Takenaka Y."/>
            <person name="Taki K."/>
            <person name="Tammoja K."/>
            <person name="Tan S.L."/>
            <person name="Tang S."/>
            <person name="Taylor M.S."/>
            <person name="Tegner J."/>
            <person name="Teichmann S.A."/>
            <person name="Ueda H.R."/>
            <person name="van Nimwegen E."/>
            <person name="Verardo R."/>
            <person name="Wei C.L."/>
            <person name="Yagi K."/>
            <person name="Yamanishi H."/>
            <person name="Zabarovsky E."/>
            <person name="Zhu S."/>
            <person name="Zimmer A."/>
            <person name="Hide W."/>
            <person name="Bult C."/>
            <person name="Grimmond S.M."/>
            <person name="Teasdale R.D."/>
            <person name="Liu E.T."/>
            <person name="Brusic V."/>
            <person name="Quackenbush J."/>
            <person name="Wahlestedt C."/>
            <person name="Mattick J.S."/>
            <person name="Hume D.A."/>
            <person name="Kai C."/>
            <person name="Sasaki D."/>
            <person name="Tomaru Y."/>
            <person name="Fukuda S."/>
            <person name="Kanamori-Katayama M."/>
            <person name="Suzuki M."/>
            <person name="Aoki J."/>
            <person name="Arakawa T."/>
            <person name="Iida J."/>
            <person name="Imamura K."/>
            <person name="Itoh M."/>
            <person name="Kato T."/>
            <person name="Kawaji H."/>
            <person name="Kawagashira N."/>
            <person name="Kawashima T."/>
            <person name="Kojima M."/>
            <person name="Kondo S."/>
            <person name="Konno H."/>
            <person name="Nakano K."/>
            <person name="Ninomiya N."/>
            <person name="Nishio T."/>
            <person name="Okada M."/>
            <person name="Plessy C."/>
            <person name="Shibata K."/>
            <person name="Shiraki T."/>
            <person name="Suzuki S."/>
            <person name="Tagami M."/>
            <person name="Waki K."/>
            <person name="Watahiki A."/>
            <person name="Okamura-Oho Y."/>
            <person name="Suzuki H."/>
            <person name="Kawai J."/>
            <person name="Hayashizaki Y."/>
        </authorList>
    </citation>
    <scope>NUCLEOTIDE SEQUENCE [LARGE SCALE MRNA] (ISOFORMS 2 AND 3)</scope>
    <source>
        <strain>C57BL/6J</strain>
        <tissue>Corpora quadrigemina</tissue>
        <tissue>Head</tissue>
    </source>
</reference>
<reference key="3">
    <citation type="journal article" date="2004" name="Genome Res.">
        <title>The status, quality, and expansion of the NIH full-length cDNA project: the Mammalian Gene Collection (MGC).</title>
        <authorList>
            <consortium name="The MGC Project Team"/>
        </authorList>
    </citation>
    <scope>NUCLEOTIDE SEQUENCE [LARGE SCALE MRNA] (ISOFORMS 1 AND 3)</scope>
    <source>
        <tissue>Brain</tissue>
    </source>
</reference>
<reference key="4">
    <citation type="journal article" date="2008" name="PLoS Genet.">
        <title>Primary coenzyme Q deficiency in Pdss2 mutant mice causes isolated renal disease.</title>
        <authorList>
            <person name="Peng M."/>
            <person name="Falk M.J."/>
            <person name="Haase V.H."/>
            <person name="King R."/>
            <person name="Polyak E."/>
            <person name="Selak M."/>
            <person name="Yudkoff M."/>
            <person name="Hancock W.W."/>
            <person name="Meade R."/>
            <person name="Saiki R."/>
            <person name="Lunceford A.L."/>
            <person name="Clarke C.F."/>
            <person name="Gasser D.L."/>
        </authorList>
    </citation>
    <scope>DISRUPTION PHENOTYPE</scope>
    <scope>FUNCTION</scope>
</reference>
<reference key="5">
    <citation type="journal article" date="2012" name="Neurobiol. Dis.">
        <title>Cerebellar defects in Pdss2 conditional knockout mice during embryonic development and in adulthood.</title>
        <authorList>
            <person name="Lu S."/>
            <person name="Lu L.Y."/>
            <person name="Liu M.F."/>
            <person name="Yuan Q.J."/>
            <person name="Sham M.H."/>
            <person name="Guan X.Y."/>
            <person name="Huang J.D."/>
        </authorList>
    </citation>
    <scope>DISRUPTION PHENOTYPE</scope>
    <scope>FUNCTION</scope>
</reference>
<keyword id="KW-0025">Alternative splicing</keyword>
<keyword id="KW-0414">Isoprene biosynthesis</keyword>
<keyword id="KW-0443">Lipid metabolism</keyword>
<keyword id="KW-0496">Mitochondrion</keyword>
<keyword id="KW-1185">Reference proteome</keyword>
<keyword id="KW-0808">Transferase</keyword>
<keyword id="KW-0831">Ubiquinone biosynthesis</keyword>
<gene>
    <name evidence="10" type="primary">Pdss2</name>
    <name evidence="7" type="synonym">Dlp1</name>
</gene>
<evidence type="ECO:0000250" key="1">
    <source>
        <dbReference type="UniProtKB" id="Q86YH6"/>
    </source>
</evidence>
<evidence type="ECO:0000269" key="2">
    <source>
    </source>
</evidence>
<evidence type="ECO:0000269" key="3">
    <source>
    </source>
</evidence>
<evidence type="ECO:0000269" key="4">
    <source>
    </source>
</evidence>
<evidence type="ECO:0000303" key="5">
    <source>
    </source>
</evidence>
<evidence type="ECO:0000303" key="6">
    <source>
    </source>
</evidence>
<evidence type="ECO:0000303" key="7">
    <source>
    </source>
</evidence>
<evidence type="ECO:0000305" key="8"/>
<evidence type="ECO:0000305" key="9">
    <source>
    </source>
</evidence>
<evidence type="ECO:0000312" key="10">
    <source>
        <dbReference type="MGI" id="MGI:1918615"/>
    </source>
</evidence>
<comment type="function">
    <text evidence="2 3 4">Heterotetrameric enzyme that catalyzes the condensation of farnesyl diphosphate (FPP), which acts as a primer, and isopentenyl diphosphate (IPP) to produce prenyl diphosphates of varying chain lengths and participates in the determination of the side chain of ubiquinone (PubMed:16262699). Supplies nona and decaprenyl diphosphate, the precursors for the side chain of the isoprenoid quinones ubiquinone-9 (Q9) and ubiquinone-10 (Q10) respectively (PubMed:16262699). The enzyme adds isopentenyl diphosphate molecules sequentially to farnesyl diphosphate with trans stereochemistry (PubMed:16262699). May play a role during cerebellar development (PubMed:21871565). May regulate mitochondrial respiratory chain function (PubMed:18437205).</text>
</comment>
<comment type="catalytic activity">
    <reaction evidence="1">
        <text>7 isopentenyl diphosphate + (2E,6E)-farnesyl diphosphate = all-trans-decaprenyl diphosphate + 7 diphosphate</text>
        <dbReference type="Rhea" id="RHEA:27802"/>
        <dbReference type="ChEBI" id="CHEBI:33019"/>
        <dbReference type="ChEBI" id="CHEBI:60721"/>
        <dbReference type="ChEBI" id="CHEBI:128769"/>
        <dbReference type="ChEBI" id="CHEBI:175763"/>
        <dbReference type="EC" id="2.5.1.91"/>
    </reaction>
    <physiologicalReaction direction="left-to-right" evidence="1">
        <dbReference type="Rhea" id="RHEA:27803"/>
    </physiologicalReaction>
</comment>
<comment type="catalytic activity">
    <reaction evidence="2">
        <text>6 isopentenyl diphosphate + (2E,6E)-farnesyl diphosphate = all-trans-nonaprenyl diphosphate + 6 diphosphate</text>
        <dbReference type="Rhea" id="RHEA:55364"/>
        <dbReference type="ChEBI" id="CHEBI:33019"/>
        <dbReference type="ChEBI" id="CHEBI:58391"/>
        <dbReference type="ChEBI" id="CHEBI:128769"/>
        <dbReference type="ChEBI" id="CHEBI:175763"/>
    </reaction>
    <physiologicalReaction direction="left-to-right" evidence="9">
        <dbReference type="Rhea" id="RHEA:55365"/>
    </physiologicalReaction>
</comment>
<comment type="pathway">
    <text evidence="2">Cofactor biosynthesis; ubiquinone biosynthesis.</text>
</comment>
<comment type="subunit">
    <text evidence="2">Heterotetramer composed of 2 PDSS1/DPS1 and 2 PDSS2/DLP1 subunits.</text>
</comment>
<comment type="subcellular location">
    <subcellularLocation>
        <location evidence="8">Mitochondrion</location>
    </subcellularLocation>
</comment>
<comment type="alternative products">
    <event type="alternative splicing"/>
    <isoform>
        <id>Q33DR3-1</id>
        <name>1</name>
        <sequence type="displayed"/>
    </isoform>
    <isoform>
        <id>Q33DR3-2</id>
        <name>2</name>
        <sequence type="described" ref="VSP_017104 VSP_017105"/>
    </isoform>
    <isoform>
        <id>Q33DR3-3</id>
        <name>3</name>
        <sequence type="described" ref="VSP_017102 VSP_017103"/>
    </isoform>
</comment>
<comment type="disruption phenotype">
    <text evidence="3 4">Homozygous mice for PDSS2 are embryonic lethal (PubMed:18437205, PubMed:21871565). The oldest PDSS2 embryo identified is at E9.5, and its morphology resembles normal E6.5 mouse embryo, so the development of mutant embryo may be blocked at late gastrula stage (PubMed:18437205, PubMed:21871565). Conditional knockout mice lacking PDSS2 in cerebellum show severe cerebellum hypoplasia during cerebellum development, whereas conditional knockout mice lacking PDSS2 in Purkinje cells at postnatal stages leads to the development of cerebellar ataxia (PubMed:21871565). Conditional knockout mice lacking PDSS2 in glomeruli show interstitial nephritis characterized by greatly dilated tubules and extensive interstitial infiltration associated with hypercholesterolemia (PubMed:18437205). Liver-conditional knockout mice have no overt disease but their livers have undetectable COQ9 levels, impaired respiratory capacity, and significantly altered intermediary metabolism (PubMed:18437205).</text>
</comment>
<comment type="similarity">
    <text evidence="8">Belongs to the FPP/GGPP synthase family.</text>
</comment>
<proteinExistence type="evidence at protein level"/>
<name>DLP1_MOUSE</name>
<accession>Q33DR3</accession>
<accession>B2RWA7</accession>
<accession>B2RWF3</accession>
<accession>Q3USU6</accession>
<accession>Q9D3K7</accession>
<sequence>MSLRQLLLRLSGYLGASGPPSRHWWYFRSLDSISSAGSWRGRSSRSPAHWNQVVSEAEKIVGYPASFMSLRCLLSDELSNIAMQVRKLVGTGHPLLTTARALVHDSRHNLQLRGLVVLLISKAAGPSTRNAACQNYDMVSGVYSCQRSLAEITELIHTALLVHRGIVNLSELQSSDGPLKDMQFGNKIAILSGDFLLANACNGLALLQNTKVVELLSSALMDLVHGVYQENSASTKENSIPDDIGISTWKEQTFLSHCALLAKSCQAAMELAKHDAAVQDMAFQYGKHMAMSHKINADLQPFIKDKASDSKTFNLNSAPVVLHQEFLGRDLWIKQIGEAQEKGSLNYSKLRETIKAGKGVTSAIDLCRYHGNKALEALESFPPSEARSALENIVFAVTRFS</sequence>
<protein>
    <recommendedName>
        <fullName evidence="8">All trans-polyprenyl-diphosphate synthase PDSS2</fullName>
    </recommendedName>
    <alternativeName>
        <fullName evidence="1">All-trans-decaprenyl-diphosphate synthase subunit 2</fullName>
        <ecNumber evidence="1">2.5.1.91</ecNumber>
    </alternativeName>
    <alternativeName>
        <fullName evidence="10">Decaprenyl-diphosphate synthase subunit 2</fullName>
    </alternativeName>
    <alternativeName>
        <fullName>Solanesyl-diphosphate synthase subunit 2</fullName>
    </alternativeName>
</protein>
<feature type="chain" id="PRO_0000123979" description="All trans-polyprenyl-diphosphate synthase PDSS2">
    <location>
        <begin position="1"/>
        <end position="401"/>
    </location>
</feature>
<feature type="splice variant" id="VSP_017102" description="In isoform 3." evidence="5 6">
    <original>VELLSSALMDLVHGVYQENSASTKENSIPDDIGISTWKEQTFLSHCALLAKS</original>
    <variation>KAERLTCAHTASGVSCLAAEATDRGVCVLLLSSSMWMLTETDDGDLGSDNMK</variation>
    <location>
        <begin position="213"/>
        <end position="264"/>
    </location>
</feature>
<feature type="splice variant" id="VSP_017103" description="In isoform 3." evidence="5 6">
    <location>
        <begin position="265"/>
        <end position="401"/>
    </location>
</feature>
<feature type="splice variant" id="VSP_017104" description="In isoform 2." evidence="6">
    <original>LRE</original>
    <variation>VVS</variation>
    <location>
        <begin position="350"/>
        <end position="352"/>
    </location>
</feature>
<feature type="splice variant" id="VSP_017105" description="In isoform 2." evidence="6">
    <location>
        <begin position="353"/>
        <end position="401"/>
    </location>
</feature>
<feature type="sequence conflict" description="In Ref. 1; BAE48218." evidence="8" ref="1">
    <original>A</original>
    <variation>S</variation>
    <location>
        <position position="132"/>
    </location>
</feature>
<feature type="sequence conflict" description="In Ref. 2; BAB30693." evidence="8" ref="2">
    <original>L</original>
    <variation>I</variation>
    <location>
        <position position="204"/>
    </location>
</feature>
<organism>
    <name type="scientific">Mus musculus</name>
    <name type="common">Mouse</name>
    <dbReference type="NCBI Taxonomy" id="10090"/>
    <lineage>
        <taxon>Eukaryota</taxon>
        <taxon>Metazoa</taxon>
        <taxon>Chordata</taxon>
        <taxon>Craniata</taxon>
        <taxon>Vertebrata</taxon>
        <taxon>Euteleostomi</taxon>
        <taxon>Mammalia</taxon>
        <taxon>Eutheria</taxon>
        <taxon>Euarchontoglires</taxon>
        <taxon>Glires</taxon>
        <taxon>Rodentia</taxon>
        <taxon>Myomorpha</taxon>
        <taxon>Muroidea</taxon>
        <taxon>Muridae</taxon>
        <taxon>Murinae</taxon>
        <taxon>Mus</taxon>
        <taxon>Mus</taxon>
    </lineage>
</organism>
<dbReference type="EC" id="2.5.1.91" evidence="1"/>
<dbReference type="EMBL" id="AB210840">
    <property type="protein sequence ID" value="BAE48218.1"/>
    <property type="molecule type" value="mRNA"/>
</dbReference>
<dbReference type="EMBL" id="AK017329">
    <property type="protein sequence ID" value="BAB30693.1"/>
    <property type="molecule type" value="mRNA"/>
</dbReference>
<dbReference type="EMBL" id="AK140091">
    <property type="protein sequence ID" value="BAE24234.1"/>
    <property type="molecule type" value="mRNA"/>
</dbReference>
<dbReference type="EMBL" id="BC147693">
    <property type="protein sequence ID" value="AAI47694.1"/>
    <property type="molecule type" value="mRNA"/>
</dbReference>
<dbReference type="EMBL" id="BC147694">
    <property type="protein sequence ID" value="AAI47695.1"/>
    <property type="molecule type" value="mRNA"/>
</dbReference>
<dbReference type="EMBL" id="BC147752">
    <property type="protein sequence ID" value="AAI47753.1"/>
    <property type="molecule type" value="mRNA"/>
</dbReference>
<dbReference type="EMBL" id="BC147753">
    <property type="protein sequence ID" value="AAI47754.1"/>
    <property type="molecule type" value="mRNA"/>
</dbReference>
<dbReference type="CCDS" id="CCDS35891.1">
    <molecule id="Q33DR3-1"/>
</dbReference>
<dbReference type="CCDS" id="CCDS48552.1">
    <molecule id="Q33DR3-2"/>
</dbReference>
<dbReference type="RefSeq" id="NP_001161761.1">
    <molecule id="Q33DR3-2"/>
    <property type="nucleotide sequence ID" value="NM_001168289.1"/>
</dbReference>
<dbReference type="RefSeq" id="NP_082048.2">
    <molecule id="Q33DR3-1"/>
    <property type="nucleotide sequence ID" value="NM_027772.2"/>
</dbReference>
<dbReference type="SMR" id="Q33DR3"/>
<dbReference type="FunCoup" id="Q33DR3">
    <property type="interactions" value="1682"/>
</dbReference>
<dbReference type="STRING" id="10090.ENSMUSP00000093393"/>
<dbReference type="PhosphoSitePlus" id="Q33DR3"/>
<dbReference type="PaxDb" id="10090-ENSMUSP00000093393"/>
<dbReference type="PeptideAtlas" id="Q33DR3"/>
<dbReference type="ProteomicsDB" id="279435">
    <molecule id="Q33DR3-1"/>
</dbReference>
<dbReference type="ProteomicsDB" id="279436">
    <molecule id="Q33DR3-2"/>
</dbReference>
<dbReference type="ProteomicsDB" id="279437">
    <molecule id="Q33DR3-3"/>
</dbReference>
<dbReference type="Pumba" id="Q33DR3"/>
<dbReference type="Antibodypedia" id="32171">
    <property type="antibodies" value="323 antibodies from 24 providers"/>
</dbReference>
<dbReference type="Ensembl" id="ENSMUST00000095725.11">
    <molecule id="Q33DR3-1"/>
    <property type="protein sequence ID" value="ENSMUSP00000093393.5"/>
    <property type="gene ID" value="ENSMUSG00000038240.14"/>
</dbReference>
<dbReference type="Ensembl" id="ENSMUST00000159139.8">
    <molecule id="Q33DR3-2"/>
    <property type="protein sequence ID" value="ENSMUSP00000124864.2"/>
    <property type="gene ID" value="ENSMUSG00000038240.14"/>
</dbReference>
<dbReference type="GeneID" id="71365"/>
<dbReference type="KEGG" id="mmu:71365"/>
<dbReference type="UCSC" id="uc007ezh.2">
    <molecule id="Q33DR3-3"/>
    <property type="organism name" value="mouse"/>
</dbReference>
<dbReference type="UCSC" id="uc007ezi.2">
    <molecule id="Q33DR3-1"/>
    <property type="organism name" value="mouse"/>
</dbReference>
<dbReference type="UCSC" id="uc011xdk.1">
    <molecule id="Q33DR3-2"/>
    <property type="organism name" value="mouse"/>
</dbReference>
<dbReference type="AGR" id="MGI:1918615"/>
<dbReference type="CTD" id="57107"/>
<dbReference type="MGI" id="MGI:1918615">
    <property type="gene designation" value="Pdss2"/>
</dbReference>
<dbReference type="VEuPathDB" id="HostDB:ENSMUSG00000038240"/>
<dbReference type="eggNOG" id="KOG0776">
    <property type="taxonomic scope" value="Eukaryota"/>
</dbReference>
<dbReference type="GeneTree" id="ENSGT00940000153498"/>
<dbReference type="HOGENOM" id="CLU_014015_3_1_1"/>
<dbReference type="InParanoid" id="Q33DR3"/>
<dbReference type="OMA" id="YPTSYFS"/>
<dbReference type="OrthoDB" id="9983019at2759"/>
<dbReference type="PhylomeDB" id="Q33DR3"/>
<dbReference type="TreeFam" id="TF354277"/>
<dbReference type="Reactome" id="R-MMU-2142789">
    <property type="pathway name" value="Ubiquinol biosynthesis"/>
</dbReference>
<dbReference type="UniPathway" id="UPA00232"/>
<dbReference type="BioGRID-ORCS" id="71365">
    <property type="hits" value="20 hits in 80 CRISPR screens"/>
</dbReference>
<dbReference type="ChiTaRS" id="Pdss2">
    <property type="organism name" value="mouse"/>
</dbReference>
<dbReference type="PRO" id="PR:Q33DR3"/>
<dbReference type="Proteomes" id="UP000000589">
    <property type="component" value="Chromosome 10"/>
</dbReference>
<dbReference type="RNAct" id="Q33DR3">
    <property type="molecule type" value="protein"/>
</dbReference>
<dbReference type="Bgee" id="ENSMUSG00000038240">
    <property type="expression patterns" value="Expressed in floor plate of midbrain and 197 other cell types or tissues"/>
</dbReference>
<dbReference type="ExpressionAtlas" id="Q33DR3">
    <property type="expression patterns" value="baseline and differential"/>
</dbReference>
<dbReference type="GO" id="GO:0005829">
    <property type="term" value="C:cytosol"/>
    <property type="evidence" value="ECO:0007669"/>
    <property type="project" value="Ensembl"/>
</dbReference>
<dbReference type="GO" id="GO:0032478">
    <property type="term" value="C:heterotetrameric polyprenyl diphosphate synthase complex"/>
    <property type="evidence" value="ECO:0000314"/>
    <property type="project" value="BHF-UCL"/>
</dbReference>
<dbReference type="GO" id="GO:0005739">
    <property type="term" value="C:mitochondrion"/>
    <property type="evidence" value="ECO:0007005"/>
    <property type="project" value="MGI"/>
</dbReference>
<dbReference type="GO" id="GO:1990234">
    <property type="term" value="C:transferase complex"/>
    <property type="evidence" value="ECO:0000316"/>
    <property type="project" value="MGI"/>
</dbReference>
<dbReference type="GO" id="GO:0110142">
    <property type="term" value="C:ubiquinone biosynthesis complex"/>
    <property type="evidence" value="ECO:0000316"/>
    <property type="project" value="MGI"/>
</dbReference>
<dbReference type="GO" id="GO:0097269">
    <property type="term" value="F:all-trans-decaprenyl-diphosphate synthase activity"/>
    <property type="evidence" value="ECO:0007669"/>
    <property type="project" value="UniProtKB-EC"/>
</dbReference>
<dbReference type="GO" id="GO:0046982">
    <property type="term" value="F:protein heterodimerization activity"/>
    <property type="evidence" value="ECO:0000314"/>
    <property type="project" value="HGNC-UCL"/>
</dbReference>
<dbReference type="GO" id="GO:0021549">
    <property type="term" value="P:cerebellum development"/>
    <property type="evidence" value="ECO:0000315"/>
    <property type="project" value="UniProtKB"/>
</dbReference>
<dbReference type="GO" id="GO:0008299">
    <property type="term" value="P:isoprenoid biosynthetic process"/>
    <property type="evidence" value="ECO:0000314"/>
    <property type="project" value="HGNC-UCL"/>
</dbReference>
<dbReference type="GO" id="GO:0050878">
    <property type="term" value="P:regulation of body fluid levels"/>
    <property type="evidence" value="ECO:0000315"/>
    <property type="project" value="MGI"/>
</dbReference>
<dbReference type="GO" id="GO:0006744">
    <property type="term" value="P:ubiquinone biosynthetic process"/>
    <property type="evidence" value="ECO:0000314"/>
    <property type="project" value="HGNC-UCL"/>
</dbReference>
<dbReference type="Gene3D" id="1.10.600.10">
    <property type="entry name" value="Farnesyl Diphosphate Synthase"/>
    <property type="match status" value="1"/>
</dbReference>
<dbReference type="InterPro" id="IPR008949">
    <property type="entry name" value="Isoprenoid_synthase_dom_sf"/>
</dbReference>
<dbReference type="InterPro" id="IPR000092">
    <property type="entry name" value="Polyprenyl_synt"/>
</dbReference>
<dbReference type="PANTHER" id="PTHR12001:SF55">
    <property type="entry name" value="ALL TRANS-POLYPRENYL-DIPHOSPHATE SYNTHASE PDSS2"/>
    <property type="match status" value="1"/>
</dbReference>
<dbReference type="PANTHER" id="PTHR12001">
    <property type="entry name" value="GERANYLGERANYL PYROPHOSPHATE SYNTHASE"/>
    <property type="match status" value="1"/>
</dbReference>
<dbReference type="Pfam" id="PF00348">
    <property type="entry name" value="polyprenyl_synt"/>
    <property type="match status" value="1"/>
</dbReference>
<dbReference type="SUPFAM" id="SSF48576">
    <property type="entry name" value="Terpenoid synthases"/>
    <property type="match status" value="1"/>
</dbReference>